<organism>
    <name type="scientific">Shewanella baltica (strain OS185)</name>
    <dbReference type="NCBI Taxonomy" id="402882"/>
    <lineage>
        <taxon>Bacteria</taxon>
        <taxon>Pseudomonadati</taxon>
        <taxon>Pseudomonadota</taxon>
        <taxon>Gammaproteobacteria</taxon>
        <taxon>Alteromonadales</taxon>
        <taxon>Shewanellaceae</taxon>
        <taxon>Shewanella</taxon>
    </lineage>
</organism>
<comment type="function">
    <text evidence="1">Hydrolyzes diadenosine 5',5'''-P1,P4-tetraphosphate to yield ADP.</text>
</comment>
<comment type="catalytic activity">
    <reaction evidence="1">
        <text>P(1),P(4)-bis(5'-adenosyl) tetraphosphate + H2O = 2 ADP + 2 H(+)</text>
        <dbReference type="Rhea" id="RHEA:24252"/>
        <dbReference type="ChEBI" id="CHEBI:15377"/>
        <dbReference type="ChEBI" id="CHEBI:15378"/>
        <dbReference type="ChEBI" id="CHEBI:58141"/>
        <dbReference type="ChEBI" id="CHEBI:456216"/>
        <dbReference type="EC" id="3.6.1.41"/>
    </reaction>
</comment>
<comment type="similarity">
    <text evidence="1">Belongs to the Ap4A hydrolase family.</text>
</comment>
<sequence>MAHYFVGDIQGCFAELQKLLAKVDFNPSRDELWAVGDLVARGPDSLATLRFFRSLGDSAKTVLGNHDLHLMALHGKLKRAKPSDNLTEILESPDISASIDWLRQQPLMRELPEHQLIMSHAGVPPQWSLEVLREEAALVSCALKQDDYLEALIAQMYSDSAEQWDPSAIGIERLRYCINALTRMRYLYVDGRLDFDCKQPPENCTNPQLKPWFEFVSPLRQSHTLVFGHWAALMGNVGDTKLKALDTGCCWGEHLTLWHLEKDQKITQKKLKKS</sequence>
<feature type="chain" id="PRO_1000012089" description="Bis(5'-nucleosyl)-tetraphosphatase, symmetrical">
    <location>
        <begin position="1"/>
        <end position="274"/>
    </location>
</feature>
<name>APAH_SHEB8</name>
<accession>A6WK57</accession>
<dbReference type="EC" id="3.6.1.41" evidence="1"/>
<dbReference type="EMBL" id="CP000753">
    <property type="protein sequence ID" value="ABS07196.1"/>
    <property type="molecule type" value="Genomic_DNA"/>
</dbReference>
<dbReference type="RefSeq" id="WP_012088474.1">
    <property type="nucleotide sequence ID" value="NC_009665.1"/>
</dbReference>
<dbReference type="SMR" id="A6WK57"/>
<dbReference type="KEGG" id="sbm:Shew185_1044"/>
<dbReference type="HOGENOM" id="CLU_056184_2_0_6"/>
<dbReference type="GO" id="GO:0005737">
    <property type="term" value="C:cytoplasm"/>
    <property type="evidence" value="ECO:0007669"/>
    <property type="project" value="TreeGrafter"/>
</dbReference>
<dbReference type="GO" id="GO:0008803">
    <property type="term" value="F:bis(5'-nucleosyl)-tetraphosphatase (symmetrical) activity"/>
    <property type="evidence" value="ECO:0007669"/>
    <property type="project" value="UniProtKB-UniRule"/>
</dbReference>
<dbReference type="GO" id="GO:0016791">
    <property type="term" value="F:phosphatase activity"/>
    <property type="evidence" value="ECO:0007669"/>
    <property type="project" value="TreeGrafter"/>
</dbReference>
<dbReference type="GO" id="GO:0110154">
    <property type="term" value="P:RNA decapping"/>
    <property type="evidence" value="ECO:0007669"/>
    <property type="project" value="TreeGrafter"/>
</dbReference>
<dbReference type="CDD" id="cd07422">
    <property type="entry name" value="MPP_ApaH"/>
    <property type="match status" value="1"/>
</dbReference>
<dbReference type="Gene3D" id="3.60.21.10">
    <property type="match status" value="1"/>
</dbReference>
<dbReference type="HAMAP" id="MF_00199">
    <property type="entry name" value="ApaH"/>
    <property type="match status" value="1"/>
</dbReference>
<dbReference type="InterPro" id="IPR050126">
    <property type="entry name" value="Ap4A_hydrolase"/>
</dbReference>
<dbReference type="InterPro" id="IPR004617">
    <property type="entry name" value="ApaH"/>
</dbReference>
<dbReference type="InterPro" id="IPR004843">
    <property type="entry name" value="Calcineurin-like_PHP_ApaH"/>
</dbReference>
<dbReference type="InterPro" id="IPR029052">
    <property type="entry name" value="Metallo-depent_PP-like"/>
</dbReference>
<dbReference type="NCBIfam" id="TIGR00668">
    <property type="entry name" value="apaH"/>
    <property type="match status" value="1"/>
</dbReference>
<dbReference type="NCBIfam" id="NF001204">
    <property type="entry name" value="PRK00166.1"/>
    <property type="match status" value="1"/>
</dbReference>
<dbReference type="PANTHER" id="PTHR42850:SF11">
    <property type="entry name" value="BIS(5'-NUCLEOSYL)-TETRAPHOSPHATASE [SYMMETRICAL]"/>
    <property type="match status" value="1"/>
</dbReference>
<dbReference type="PANTHER" id="PTHR42850">
    <property type="entry name" value="METALLOPHOSPHOESTERASE"/>
    <property type="match status" value="1"/>
</dbReference>
<dbReference type="Pfam" id="PF00149">
    <property type="entry name" value="Metallophos"/>
    <property type="match status" value="1"/>
</dbReference>
<dbReference type="PIRSF" id="PIRSF000903">
    <property type="entry name" value="B5n-ttraPtase_sm"/>
    <property type="match status" value="1"/>
</dbReference>
<dbReference type="SUPFAM" id="SSF56300">
    <property type="entry name" value="Metallo-dependent phosphatases"/>
    <property type="match status" value="1"/>
</dbReference>
<protein>
    <recommendedName>
        <fullName evidence="1">Bis(5'-nucleosyl)-tetraphosphatase, symmetrical</fullName>
        <ecNumber evidence="1">3.6.1.41</ecNumber>
    </recommendedName>
    <alternativeName>
        <fullName evidence="1">Ap4A hydrolase</fullName>
    </alternativeName>
    <alternativeName>
        <fullName evidence="1">Diadenosine 5',5'''-P1,P4-tetraphosphate pyrophosphohydrolase</fullName>
    </alternativeName>
    <alternativeName>
        <fullName evidence="1">Diadenosine tetraphosphatase</fullName>
    </alternativeName>
</protein>
<gene>
    <name evidence="1" type="primary">apaH</name>
    <name type="ordered locus">Shew185_1044</name>
</gene>
<reference key="1">
    <citation type="submission" date="2007-07" db="EMBL/GenBank/DDBJ databases">
        <title>Complete sequence of chromosome of Shewanella baltica OS185.</title>
        <authorList>
            <consortium name="US DOE Joint Genome Institute"/>
            <person name="Copeland A."/>
            <person name="Lucas S."/>
            <person name="Lapidus A."/>
            <person name="Barry K."/>
            <person name="Glavina del Rio T."/>
            <person name="Dalin E."/>
            <person name="Tice H."/>
            <person name="Pitluck S."/>
            <person name="Sims D."/>
            <person name="Brettin T."/>
            <person name="Bruce D."/>
            <person name="Detter J.C."/>
            <person name="Han C."/>
            <person name="Schmutz J."/>
            <person name="Larimer F."/>
            <person name="Land M."/>
            <person name="Hauser L."/>
            <person name="Kyrpides N."/>
            <person name="Mikhailova N."/>
            <person name="Brettar I."/>
            <person name="Rodrigues J."/>
            <person name="Konstantinidis K."/>
            <person name="Tiedje J."/>
            <person name="Richardson P."/>
        </authorList>
    </citation>
    <scope>NUCLEOTIDE SEQUENCE [LARGE SCALE GENOMIC DNA]</scope>
    <source>
        <strain>OS185</strain>
    </source>
</reference>
<evidence type="ECO:0000255" key="1">
    <source>
        <dbReference type="HAMAP-Rule" id="MF_00199"/>
    </source>
</evidence>
<keyword id="KW-0378">Hydrolase</keyword>
<proteinExistence type="inferred from homology"/>